<protein>
    <recommendedName>
        <fullName evidence="7">U-actitoxin-Oulsp1</fullName>
        <shortName evidence="5">U-AITX-Oulsp1</shortName>
    </recommendedName>
    <alternativeName>
        <fullName evidence="5">OspTx2a</fullName>
    </alternativeName>
</protein>
<comment type="function">
    <text evidence="4">Toxin that weakly blocks the two voltage-gated potassium channels on Kv1.2/KCNA2 (IC(50)=1.8-2.5 uM) and Kv1.6/KCNA6 (IC(50)=5.6-6.2 uM).</text>
</comment>
<comment type="subcellular location">
    <subcellularLocation>
        <location evidence="7">Secreted</location>
    </subcellularLocation>
</comment>
<comment type="PTM">
    <text evidence="7">Two similar peptides (OspTx2a-p1 and -p2) are obtained after synthesis and oxidative folding. They may differ by a D-Cys at position 76 (corresponding to OspTx2a-p2). Since C-terminal Cys residues are prone to racemization during solid-phase peptide synthesis, and if the presence of a D-amino acid is correct, it is probable that OspTx2a-p1 (L-Cys-76 form) corresponds to the native peptide.</text>
</comment>
<comment type="miscellaneous">
    <text evidence="4">The 49-Phe-Pro-50 bond exists only in the trans-isomerization.</text>
</comment>
<comment type="miscellaneous">
    <text evidence="4">Negative results: has no effect on rKv1.1/KCNA1, hKv1.3/KCNA3, rKv1.4/KCNA4, rKv1.5/KCNA5, hKv2.1/KCNB1, rKv3.1/KCNC1, rKv4.2/KCND2, hKv10.1/EAG1/KCNH1, Kv11.1/HERG/KCNH2, and Shaker IR (tested at 10 uM).</text>
</comment>
<comment type="similarity">
    <text evidence="6">Belongs to the sea anemone type 1 potassium channel toxin family. Type 1b subfamily.</text>
</comment>
<organism>
    <name type="scientific">Oulactis sp.</name>
    <name type="common">Sea anemone</name>
    <dbReference type="NCBI Taxonomy" id="2093647"/>
    <lineage>
        <taxon>Eukaryota</taxon>
        <taxon>Metazoa</taxon>
        <taxon>Cnidaria</taxon>
        <taxon>Anthozoa</taxon>
        <taxon>Hexacorallia</taxon>
        <taxon>Actiniaria</taxon>
        <taxon>Actiniidae</taxon>
        <taxon>Oulactis</taxon>
    </lineage>
</organism>
<accession>A0A330KW27</accession>
<sequence length="79" mass="8711">MNTKLVVVFLLSAILFVSVTASRPGKDLERDEAYETYDDENKRACKDVFPAATCRHAKSVGNCSSEKYKRNCAITCGAC</sequence>
<reference key="1">
    <citation type="journal article" date="2018" name="Pept. Sci.">
        <title>Identification, chemical synthesis, structure, and function of a new KV1 channel blocking peptide from Oulactis sp.</title>
        <authorList>
            <person name="Sunanda P."/>
            <person name="Krishnarjuna B."/>
            <person name="Peigneur S."/>
            <person name="Mitchell M.L."/>
            <person name="Estrada R."/>
            <person name="Villegas-Moreno J."/>
            <person name="Pennington M.W."/>
            <person name="Tytgat J."/>
            <person name="Norton R.S."/>
        </authorList>
    </citation>
    <scope>NUCLEOTIDE SEQUENCE [MRNA]</scope>
    <scope>SYNTHESIS OF 44-79</scope>
    <scope>FUNCTION</scope>
    <scope>STRUCTURE BY NMR OF 44-79</scope>
    <scope>DISULFIDE BOND</scope>
    <source>
        <strain>MM-2018</strain>
    </source>
</reference>
<evidence type="ECO:0000250" key="1">
    <source>
        <dbReference type="UniProtKB" id="P29186"/>
    </source>
</evidence>
<evidence type="ECO:0000255" key="2"/>
<evidence type="ECO:0000255" key="3">
    <source>
        <dbReference type="PROSITE-ProRule" id="PRU01005"/>
    </source>
</evidence>
<evidence type="ECO:0000269" key="4">
    <source ref="1"/>
</evidence>
<evidence type="ECO:0000303" key="5">
    <source ref="1"/>
</evidence>
<evidence type="ECO:0000305" key="6"/>
<evidence type="ECO:0000305" key="7">
    <source ref="1"/>
</evidence>
<evidence type="ECO:0007744" key="8">
    <source>
        <dbReference type="PDB" id="6CKF"/>
    </source>
</evidence>
<evidence type="ECO:0007829" key="9">
    <source>
        <dbReference type="PDB" id="6CKF"/>
    </source>
</evidence>
<proteinExistence type="evidence at protein level"/>
<keyword id="KW-0002">3D-structure</keyword>
<keyword id="KW-0165">Cleavage on pair of basic residues</keyword>
<keyword id="KW-1015">Disulfide bond</keyword>
<keyword id="KW-0872">Ion channel impairing toxin</keyword>
<keyword id="KW-0528">Neurotoxin</keyword>
<keyword id="KW-0632">Potassium channel impairing toxin</keyword>
<keyword id="KW-0964">Secreted</keyword>
<keyword id="KW-0732">Signal</keyword>
<keyword id="KW-0800">Toxin</keyword>
<keyword id="KW-1220">Voltage-gated potassium channel impairing toxin</keyword>
<dbReference type="EMBL" id="LT985996">
    <property type="protein sequence ID" value="SPF25670.1"/>
    <property type="molecule type" value="mRNA"/>
</dbReference>
<dbReference type="PDB" id="6CKD">
    <property type="method" value="NMR"/>
    <property type="chains" value="A=44-79"/>
</dbReference>
<dbReference type="PDB" id="6CKF">
    <property type="method" value="NMR"/>
    <property type="chains" value="A=44-79"/>
</dbReference>
<dbReference type="PDBsum" id="6CKD"/>
<dbReference type="PDBsum" id="6CKF"/>
<dbReference type="BMRB" id="A0A330KW27"/>
<dbReference type="SMR" id="A0A330KW27"/>
<dbReference type="GO" id="GO:0005576">
    <property type="term" value="C:extracellular region"/>
    <property type="evidence" value="ECO:0007669"/>
    <property type="project" value="UniProtKB-SubCell"/>
</dbReference>
<dbReference type="GO" id="GO:0042151">
    <property type="term" value="C:nematocyst"/>
    <property type="evidence" value="ECO:0007669"/>
    <property type="project" value="UniProtKB-KW"/>
</dbReference>
<dbReference type="GO" id="GO:0015459">
    <property type="term" value="F:potassium channel regulator activity"/>
    <property type="evidence" value="ECO:0007669"/>
    <property type="project" value="UniProtKB-KW"/>
</dbReference>
<dbReference type="GO" id="GO:0090729">
    <property type="term" value="F:toxin activity"/>
    <property type="evidence" value="ECO:0007669"/>
    <property type="project" value="UniProtKB-KW"/>
</dbReference>
<dbReference type="InterPro" id="IPR003582">
    <property type="entry name" value="ShKT_dom"/>
</dbReference>
<dbReference type="SUPFAM" id="SSF57546">
    <property type="entry name" value="Crisp domain-like"/>
    <property type="match status" value="1"/>
</dbReference>
<dbReference type="PROSITE" id="PS51670">
    <property type="entry name" value="SHKT"/>
    <property type="match status" value="1"/>
</dbReference>
<feature type="signal peptide" evidence="2">
    <location>
        <begin position="1"/>
        <end position="21"/>
    </location>
</feature>
<feature type="propeptide" id="PRO_0000448544" evidence="7">
    <location>
        <begin position="22"/>
        <end position="43"/>
    </location>
</feature>
<feature type="chain" id="PRO_5016253688" description="U-actitoxin-Oulsp1" evidence="7">
    <location>
        <begin position="44"/>
        <end position="79"/>
    </location>
</feature>
<feature type="domain" description="ShKT" evidence="3">
    <location>
        <begin position="45"/>
        <end position="79"/>
    </location>
</feature>
<feature type="region of interest" description="Crucial for binding to potassium channels" evidence="1">
    <location>
        <begin position="67"/>
        <end position="68"/>
    </location>
</feature>
<feature type="disulfide bond" evidence="4 8">
    <location>
        <begin position="45"/>
        <end position="79"/>
    </location>
</feature>
<feature type="disulfide bond" evidence="4 8">
    <location>
        <begin position="54"/>
        <end position="72"/>
    </location>
</feature>
<feature type="disulfide bond" evidence="4 8">
    <location>
        <begin position="63"/>
        <end position="76"/>
    </location>
</feature>
<feature type="helix" evidence="9">
    <location>
        <begin position="51"/>
        <end position="60"/>
    </location>
</feature>
<feature type="helix" evidence="9">
    <location>
        <begin position="62"/>
        <end position="64"/>
    </location>
</feature>
<feature type="turn" evidence="9">
    <location>
        <begin position="67"/>
        <end position="69"/>
    </location>
</feature>
<feature type="strand" evidence="9">
    <location>
        <begin position="70"/>
        <end position="72"/>
    </location>
</feature>
<feature type="turn" evidence="9">
    <location>
        <begin position="73"/>
        <end position="77"/>
    </location>
</feature>
<name>K1B1_OULSP</name>